<organism>
    <name type="scientific">Escherichia coli (strain SE11)</name>
    <dbReference type="NCBI Taxonomy" id="409438"/>
    <lineage>
        <taxon>Bacteria</taxon>
        <taxon>Pseudomonadati</taxon>
        <taxon>Pseudomonadota</taxon>
        <taxon>Gammaproteobacteria</taxon>
        <taxon>Enterobacterales</taxon>
        <taxon>Enterobacteriaceae</taxon>
        <taxon>Escherichia</taxon>
    </lineage>
</organism>
<protein>
    <recommendedName>
        <fullName evidence="1">UPF0225 protein YchJ</fullName>
    </recommendedName>
</protein>
<proteinExistence type="inferred from homology"/>
<name>YCHJ_ECOSE</name>
<evidence type="ECO:0000255" key="1">
    <source>
        <dbReference type="HAMAP-Rule" id="MF_00612"/>
    </source>
</evidence>
<feature type="chain" id="PRO_1000130384" description="UPF0225 protein YchJ">
    <location>
        <begin position="1"/>
        <end position="152"/>
    </location>
</feature>
<accession>B6I9U8</accession>
<reference key="1">
    <citation type="journal article" date="2008" name="DNA Res.">
        <title>Complete genome sequence and comparative analysis of the wild-type commensal Escherichia coli strain SE11 isolated from a healthy adult.</title>
        <authorList>
            <person name="Oshima K."/>
            <person name="Toh H."/>
            <person name="Ogura Y."/>
            <person name="Sasamoto H."/>
            <person name="Morita H."/>
            <person name="Park S.-H."/>
            <person name="Ooka T."/>
            <person name="Iyoda S."/>
            <person name="Taylor T.D."/>
            <person name="Hayashi T."/>
            <person name="Itoh K."/>
            <person name="Hattori M."/>
        </authorList>
    </citation>
    <scope>NUCLEOTIDE SEQUENCE [LARGE SCALE GENOMIC DNA]</scope>
    <source>
        <strain>SE11</strain>
    </source>
</reference>
<sequence length="152" mass="16990">MSQLCPCGSAVEYSLCCHPYVSGEKVAPDPEHLMRSRYCAFVMQDADYLIKTWHPSCGAAALRAELMAGFAHTEWLGLTVFEHCWQDADNIGFVSFVARFTEGGKTGAIIERSRFLKENGQWYYIDGTRPQFGRNDPCPCGSGKKFKKCCGQ</sequence>
<comment type="similarity">
    <text evidence="1">Belongs to the UPF0225 family.</text>
</comment>
<gene>
    <name evidence="1" type="primary">ychJ</name>
    <name type="ordered locus">ECSE_1283</name>
</gene>
<dbReference type="EMBL" id="AP009240">
    <property type="protein sequence ID" value="BAG76807.1"/>
    <property type="molecule type" value="Genomic_DNA"/>
</dbReference>
<dbReference type="RefSeq" id="WP_001307143.1">
    <property type="nucleotide sequence ID" value="NC_011415.1"/>
</dbReference>
<dbReference type="SMR" id="B6I9U8"/>
<dbReference type="KEGG" id="ecy:ECSE_1283"/>
<dbReference type="HOGENOM" id="CLU_099590_0_0_6"/>
<dbReference type="Proteomes" id="UP000008199">
    <property type="component" value="Chromosome"/>
</dbReference>
<dbReference type="Gene3D" id="3.10.450.50">
    <property type="match status" value="1"/>
</dbReference>
<dbReference type="HAMAP" id="MF_00612">
    <property type="entry name" value="UPF0225"/>
    <property type="match status" value="1"/>
</dbReference>
<dbReference type="InterPro" id="IPR032710">
    <property type="entry name" value="NTF2-like_dom_sf"/>
</dbReference>
<dbReference type="InterPro" id="IPR004027">
    <property type="entry name" value="SEC_C_motif"/>
</dbReference>
<dbReference type="InterPro" id="IPR023006">
    <property type="entry name" value="UPF0225"/>
</dbReference>
<dbReference type="InterPro" id="IPR048469">
    <property type="entry name" value="YchJ-like_M"/>
</dbReference>
<dbReference type="NCBIfam" id="NF002449">
    <property type="entry name" value="PRK01617.1"/>
    <property type="match status" value="1"/>
</dbReference>
<dbReference type="NCBIfam" id="NF002486">
    <property type="entry name" value="PRK01752.1"/>
    <property type="match status" value="1"/>
</dbReference>
<dbReference type="PANTHER" id="PTHR33747:SF1">
    <property type="entry name" value="ADENYLATE CYCLASE-ASSOCIATED CAP C-TERMINAL DOMAIN-CONTAINING PROTEIN"/>
    <property type="match status" value="1"/>
</dbReference>
<dbReference type="PANTHER" id="PTHR33747">
    <property type="entry name" value="UPF0225 PROTEIN SCO1677"/>
    <property type="match status" value="1"/>
</dbReference>
<dbReference type="Pfam" id="PF02810">
    <property type="entry name" value="SEC-C"/>
    <property type="match status" value="2"/>
</dbReference>
<dbReference type="Pfam" id="PF17775">
    <property type="entry name" value="YchJ_M-like"/>
    <property type="match status" value="1"/>
</dbReference>
<dbReference type="SUPFAM" id="SSF54427">
    <property type="entry name" value="NTF2-like"/>
    <property type="match status" value="1"/>
</dbReference>
<dbReference type="SUPFAM" id="SSF103642">
    <property type="entry name" value="Sec-C motif"/>
    <property type="match status" value="1"/>
</dbReference>